<comment type="function">
    <text evidence="1 7">ATP-dependent serine protease that mediates the selective degradation of misfolded, unassembled or oxidatively damaged polypeptides as well as certain short-lived regulatory proteins in the mitochondrial matrix. May also have a chaperone function in the assembly of inner membrane protein complexes. Participates in the regulation of mitochondrial gene expression and in the maintenance of the integrity of the mitochondrial genome. Binds to mitochondrial DNA in a site-specific manner.</text>
</comment>
<comment type="catalytic activity">
    <reaction evidence="1">
        <text>Hydrolysis of proteins in presence of ATP.</text>
        <dbReference type="EC" id="3.4.21.53"/>
    </reaction>
</comment>
<comment type="subunit">
    <text evidence="1">Homohexamer or homoheptamer. Organized in a ring with a central cavity.</text>
</comment>
<comment type="subcellular location">
    <subcellularLocation>
        <location evidence="1 5 6 7">Mitochondrion matrix</location>
    </subcellularLocation>
</comment>
<comment type="similarity">
    <text evidence="1">Belongs to the peptidase S16 family.</text>
</comment>
<comment type="sequence caution" evidence="8">
    <conflict type="frameshift">
        <sequence resource="EMBL-CDS" id="AAB48000"/>
    </conflict>
</comment>
<comment type="sequence caution" evidence="8">
    <conflict type="erroneous gene model prediction">
        <sequence resource="EMBL-CDS" id="AAB61060"/>
    </conflict>
</comment>
<name>LONM1_ARATH</name>
<organism>
    <name type="scientific">Arabidopsis thaliana</name>
    <name type="common">Mouse-ear cress</name>
    <dbReference type="NCBI Taxonomy" id="3702"/>
    <lineage>
        <taxon>Eukaryota</taxon>
        <taxon>Viridiplantae</taxon>
        <taxon>Streptophyta</taxon>
        <taxon>Embryophyta</taxon>
        <taxon>Tracheophyta</taxon>
        <taxon>Spermatophyta</taxon>
        <taxon>Magnoliopsida</taxon>
        <taxon>eudicotyledons</taxon>
        <taxon>Gunneridae</taxon>
        <taxon>Pentapetalae</taxon>
        <taxon>rosids</taxon>
        <taxon>malvids</taxon>
        <taxon>Brassicales</taxon>
        <taxon>Brassicaceae</taxon>
        <taxon>Camelineae</taxon>
        <taxon>Arabidopsis</taxon>
    </lineage>
</organism>
<gene>
    <name type="primary">LON1</name>
    <name type="ordered locus">At5g26860</name>
    <name type="ORF">F2P16.23</name>
</gene>
<feature type="transit peptide" description="Mitochondrion" evidence="1">
    <location>
        <begin position="1"/>
        <end position="61"/>
    </location>
</feature>
<feature type="chain" id="PRO_0000026739" description="Lon protease homolog 1, mitochondrial">
    <location>
        <begin position="62"/>
        <end position="940"/>
    </location>
</feature>
<feature type="domain" description="Lon N-terminal" evidence="3">
    <location>
        <begin position="100"/>
        <end position="309"/>
    </location>
</feature>
<feature type="domain" description="Lon proteolytic" evidence="2">
    <location>
        <begin position="751"/>
        <end position="935"/>
    </location>
</feature>
<feature type="region of interest" description="Disordered" evidence="4">
    <location>
        <begin position="70"/>
        <end position="90"/>
    </location>
</feature>
<feature type="active site" evidence="1">
    <location>
        <position position="841"/>
    </location>
</feature>
<feature type="active site" evidence="1">
    <location>
        <position position="884"/>
    </location>
</feature>
<feature type="binding site" evidence="1">
    <location>
        <begin position="464"/>
        <end position="471"/>
    </location>
    <ligand>
        <name>ATP</name>
        <dbReference type="ChEBI" id="CHEBI:30616"/>
    </ligand>
</feature>
<feature type="modified residue" description="Phosphoserine" evidence="9">
    <location>
        <position position="74"/>
    </location>
</feature>
<feature type="sequence conflict" description="In Ref. 1; AAB48000." evidence="8" ref="1">
    <original>V</original>
    <variation>F</variation>
    <location>
        <position position="288"/>
    </location>
</feature>
<feature type="sequence conflict" description="In Ref. 1; AAB48000." evidence="8" ref="1">
    <original>K</original>
    <variation>Q</variation>
    <location>
        <position position="500"/>
    </location>
</feature>
<feature type="sequence conflict" description="In Ref. 1; AAB48000." evidence="8" ref="1">
    <original>A</original>
    <variation>S</variation>
    <location>
        <position position="679"/>
    </location>
</feature>
<feature type="sequence conflict" description="In Ref. 1; AAB48000." evidence="8" ref="1">
    <original>YD</original>
    <variation>FA</variation>
    <location>
        <begin position="935"/>
        <end position="936"/>
    </location>
</feature>
<protein>
    <recommendedName>
        <fullName>Lon protease homolog 1, mitochondrial</fullName>
        <ecNumber evidence="1">3.4.21.53</ecNumber>
    </recommendedName>
</protein>
<reference key="1">
    <citation type="submission" date="1997-02" db="EMBL/GenBank/DDBJ databases">
        <title>Mitochondrial LON protease homolog from Arabidopsis thaliana (Columbia).</title>
        <authorList>
            <person name="Sarria R."/>
            <person name="Lyznik A."/>
            <person name="MacKenzie S."/>
        </authorList>
    </citation>
    <scope>NUCLEOTIDE SEQUENCE [MRNA]</scope>
    <source>
        <strain>cv. Columbia</strain>
    </source>
</reference>
<reference key="2">
    <citation type="journal article" date="2000" name="Nature">
        <title>Sequence and analysis of chromosome 5 of the plant Arabidopsis thaliana.</title>
        <authorList>
            <person name="Tabata S."/>
            <person name="Kaneko T."/>
            <person name="Nakamura Y."/>
            <person name="Kotani H."/>
            <person name="Kato T."/>
            <person name="Asamizu E."/>
            <person name="Miyajima N."/>
            <person name="Sasamoto S."/>
            <person name="Kimura T."/>
            <person name="Hosouchi T."/>
            <person name="Kawashima K."/>
            <person name="Kohara M."/>
            <person name="Matsumoto M."/>
            <person name="Matsuno A."/>
            <person name="Muraki A."/>
            <person name="Nakayama S."/>
            <person name="Nakazaki N."/>
            <person name="Naruo K."/>
            <person name="Okumura S."/>
            <person name="Shinpo S."/>
            <person name="Takeuchi C."/>
            <person name="Wada T."/>
            <person name="Watanabe A."/>
            <person name="Yamada M."/>
            <person name="Yasuda M."/>
            <person name="Sato S."/>
            <person name="de la Bastide M."/>
            <person name="Huang E."/>
            <person name="Spiegel L."/>
            <person name="Gnoj L."/>
            <person name="O'Shaughnessy A."/>
            <person name="Preston R."/>
            <person name="Habermann K."/>
            <person name="Murray J."/>
            <person name="Johnson D."/>
            <person name="Rohlfing T."/>
            <person name="Nelson J."/>
            <person name="Stoneking T."/>
            <person name="Pepin K."/>
            <person name="Spieth J."/>
            <person name="Sekhon M."/>
            <person name="Armstrong J."/>
            <person name="Becker M."/>
            <person name="Belter E."/>
            <person name="Cordum H."/>
            <person name="Cordes M."/>
            <person name="Courtney L."/>
            <person name="Courtney W."/>
            <person name="Dante M."/>
            <person name="Du H."/>
            <person name="Edwards J."/>
            <person name="Fryman J."/>
            <person name="Haakensen B."/>
            <person name="Lamar E."/>
            <person name="Latreille P."/>
            <person name="Leonard S."/>
            <person name="Meyer R."/>
            <person name="Mulvaney E."/>
            <person name="Ozersky P."/>
            <person name="Riley A."/>
            <person name="Strowmatt C."/>
            <person name="Wagner-McPherson C."/>
            <person name="Wollam A."/>
            <person name="Yoakum M."/>
            <person name="Bell M."/>
            <person name="Dedhia N."/>
            <person name="Parnell L."/>
            <person name="Shah R."/>
            <person name="Rodriguez M."/>
            <person name="Hoon See L."/>
            <person name="Vil D."/>
            <person name="Baker J."/>
            <person name="Kirchoff K."/>
            <person name="Toth K."/>
            <person name="King L."/>
            <person name="Bahret A."/>
            <person name="Miller B."/>
            <person name="Marra M.A."/>
            <person name="Martienssen R."/>
            <person name="McCombie W.R."/>
            <person name="Wilson R.K."/>
            <person name="Murphy G."/>
            <person name="Bancroft I."/>
            <person name="Volckaert G."/>
            <person name="Wambutt R."/>
            <person name="Duesterhoeft A."/>
            <person name="Stiekema W."/>
            <person name="Pohl T."/>
            <person name="Entian K.-D."/>
            <person name="Terryn N."/>
            <person name="Hartley N."/>
            <person name="Bent E."/>
            <person name="Johnson S."/>
            <person name="Langham S.-A."/>
            <person name="McCullagh B."/>
            <person name="Robben J."/>
            <person name="Grymonprez B."/>
            <person name="Zimmermann W."/>
            <person name="Ramsperger U."/>
            <person name="Wedler H."/>
            <person name="Balke K."/>
            <person name="Wedler E."/>
            <person name="Peters S."/>
            <person name="van Staveren M."/>
            <person name="Dirkse W."/>
            <person name="Mooijman P."/>
            <person name="Klein Lankhorst R."/>
            <person name="Weitzenegger T."/>
            <person name="Bothe G."/>
            <person name="Rose M."/>
            <person name="Hauf J."/>
            <person name="Berneiser S."/>
            <person name="Hempel S."/>
            <person name="Feldpausch M."/>
            <person name="Lamberth S."/>
            <person name="Villarroel R."/>
            <person name="Gielen J."/>
            <person name="Ardiles W."/>
            <person name="Bents O."/>
            <person name="Lemcke K."/>
            <person name="Kolesov G."/>
            <person name="Mayer K.F.X."/>
            <person name="Rudd S."/>
            <person name="Schoof H."/>
            <person name="Schueller C."/>
            <person name="Zaccaria P."/>
            <person name="Mewes H.-W."/>
            <person name="Bevan M."/>
            <person name="Fransz P.F."/>
        </authorList>
    </citation>
    <scope>NUCLEOTIDE SEQUENCE [LARGE SCALE GENOMIC DNA]</scope>
    <source>
        <strain>cv. Columbia</strain>
    </source>
</reference>
<reference key="3">
    <citation type="journal article" date="2017" name="Plant J.">
        <title>Araport11: a complete reannotation of the Arabidopsis thaliana reference genome.</title>
        <authorList>
            <person name="Cheng C.Y."/>
            <person name="Krishnakumar V."/>
            <person name="Chan A.P."/>
            <person name="Thibaud-Nissen F."/>
            <person name="Schobel S."/>
            <person name="Town C.D."/>
        </authorList>
    </citation>
    <scope>GENOME REANNOTATION</scope>
    <source>
        <strain>cv. Columbia</strain>
    </source>
</reference>
<reference key="4">
    <citation type="journal article" date="2003" name="Science">
        <title>Empirical analysis of transcriptional activity in the Arabidopsis genome.</title>
        <authorList>
            <person name="Yamada K."/>
            <person name="Lim J."/>
            <person name="Dale J.M."/>
            <person name="Chen H."/>
            <person name="Shinn P."/>
            <person name="Palm C.J."/>
            <person name="Southwick A.M."/>
            <person name="Wu H.C."/>
            <person name="Kim C.J."/>
            <person name="Nguyen M."/>
            <person name="Pham P.K."/>
            <person name="Cheuk R.F."/>
            <person name="Karlin-Newmann G."/>
            <person name="Liu S.X."/>
            <person name="Lam B."/>
            <person name="Sakano H."/>
            <person name="Wu T."/>
            <person name="Yu G."/>
            <person name="Miranda M."/>
            <person name="Quach H.L."/>
            <person name="Tripp M."/>
            <person name="Chang C.H."/>
            <person name="Lee J.M."/>
            <person name="Toriumi M.J."/>
            <person name="Chan M.M."/>
            <person name="Tang C.C."/>
            <person name="Onodera C.S."/>
            <person name="Deng J.M."/>
            <person name="Akiyama K."/>
            <person name="Ansari Y."/>
            <person name="Arakawa T."/>
            <person name="Banh J."/>
            <person name="Banno F."/>
            <person name="Bowser L."/>
            <person name="Brooks S.Y."/>
            <person name="Carninci P."/>
            <person name="Chao Q."/>
            <person name="Choy N."/>
            <person name="Enju A."/>
            <person name="Goldsmith A.D."/>
            <person name="Gurjal M."/>
            <person name="Hansen N.F."/>
            <person name="Hayashizaki Y."/>
            <person name="Johnson-Hopson C."/>
            <person name="Hsuan V.W."/>
            <person name="Iida K."/>
            <person name="Karnes M."/>
            <person name="Khan S."/>
            <person name="Koesema E."/>
            <person name="Ishida J."/>
            <person name="Jiang P.X."/>
            <person name="Jones T."/>
            <person name="Kawai J."/>
            <person name="Kamiya A."/>
            <person name="Meyers C."/>
            <person name="Nakajima M."/>
            <person name="Narusaka M."/>
            <person name="Seki M."/>
            <person name="Sakurai T."/>
            <person name="Satou M."/>
            <person name="Tamse R."/>
            <person name="Vaysberg M."/>
            <person name="Wallender E.K."/>
            <person name="Wong C."/>
            <person name="Yamamura Y."/>
            <person name="Yuan S."/>
            <person name="Shinozaki K."/>
            <person name="Davis R.W."/>
            <person name="Theologis A."/>
            <person name="Ecker J.R."/>
        </authorList>
    </citation>
    <scope>NUCLEOTIDE SEQUENCE [LARGE SCALE MRNA]</scope>
    <source>
        <strain>cv. Columbia</strain>
    </source>
</reference>
<reference key="5">
    <citation type="journal article" date="2004" name="Plant Cell">
        <title>Experimental analysis of the Arabidopsis mitochondrial proteome highlights signaling and regulatory components, provides assessment of targeting prediction programs, and indicates plant-specific mitochondrial proteins.</title>
        <authorList>
            <person name="Heazlewood J.L."/>
            <person name="Tonti-Filippini J.S."/>
            <person name="Gout A.M."/>
            <person name="Day D.A."/>
            <person name="Whelan J."/>
            <person name="Millar A.H."/>
        </authorList>
    </citation>
    <scope>IDENTIFICATION BY MASS SPECTROMETRY</scope>
    <scope>SUBCELLULAR LOCATION [LARGE SCALE ANALYSIS]</scope>
    <source>
        <strain>cv. Landsberg erecta</strain>
    </source>
</reference>
<reference key="6">
    <citation type="journal article" date="2007" name="Plant Cell Physiol.">
        <title>Multiple intracellular locations of Lon protease in Arabidopsis: evidence for the localization of AtLon4 to chloroplasts.</title>
        <authorList>
            <person name="Ostersetzer O."/>
            <person name="Kato Y."/>
            <person name="Adam Z."/>
            <person name="Sakamoto W."/>
        </authorList>
    </citation>
    <scope>SUBCELLULAR LOCATION</scope>
</reference>
<reference key="7">
    <citation type="journal article" date="2008" name="J. Proteome Res.">
        <title>Site-specific phosphorylation profiling of Arabidopsis proteins by mass spectrometry and peptide chip analysis.</title>
        <authorList>
            <person name="de la Fuente van Bentem S."/>
            <person name="Anrather D."/>
            <person name="Dohnal I."/>
            <person name="Roitinger E."/>
            <person name="Csaszar E."/>
            <person name="Joore J."/>
            <person name="Buijnink J."/>
            <person name="Carreri A."/>
            <person name="Forzani C."/>
            <person name="Lorkovic Z.J."/>
            <person name="Barta A."/>
            <person name="Lecourieux D."/>
            <person name="Verhounig A."/>
            <person name="Jonak C."/>
            <person name="Hirt H."/>
        </authorList>
    </citation>
    <scope>PHOSPHORYLATION [LARGE SCALE ANALYSIS] AT SER-74</scope>
    <scope>IDENTIFICATION BY MASS SPECTROMETRY [LARGE SCALE ANALYSIS]</scope>
    <source>
        <tissue>Root</tissue>
    </source>
</reference>
<reference key="8">
    <citation type="journal article" date="2009" name="New Phytol.">
        <title>Role of Lon1 protease in post-germinative growth and maintenance of mitochondrial function in Arabidopsis thaliana.</title>
        <authorList>
            <person name="Rigas S."/>
            <person name="Daras G."/>
            <person name="Laxa M."/>
            <person name="Marathias N."/>
            <person name="Fasseas C."/>
            <person name="Sweetlove L.J."/>
            <person name="Hatzopoulos P."/>
        </authorList>
    </citation>
    <scope>FUNCTION</scope>
    <scope>SUBCELLULAR LOCATION</scope>
</reference>
<reference key="9">
    <citation type="journal article" date="2009" name="Plant Physiol.">
        <title>Large-scale Arabidopsis phosphoproteome profiling reveals novel chloroplast kinase substrates and phosphorylation networks.</title>
        <authorList>
            <person name="Reiland S."/>
            <person name="Messerli G."/>
            <person name="Baerenfaller K."/>
            <person name="Gerrits B."/>
            <person name="Endler A."/>
            <person name="Grossmann J."/>
            <person name="Gruissem W."/>
            <person name="Baginsky S."/>
        </authorList>
    </citation>
    <scope>IDENTIFICATION BY MASS SPECTROMETRY [LARGE SCALE ANALYSIS]</scope>
</reference>
<accession>P93655</accession>
<accession>O04954</accession>
<accession>Q8RWX1</accession>
<proteinExistence type="evidence at protein level"/>
<keyword id="KW-0067">ATP-binding</keyword>
<keyword id="KW-0238">DNA-binding</keyword>
<keyword id="KW-0378">Hydrolase</keyword>
<keyword id="KW-0496">Mitochondrion</keyword>
<keyword id="KW-0547">Nucleotide-binding</keyword>
<keyword id="KW-0597">Phosphoprotein</keyword>
<keyword id="KW-0645">Protease</keyword>
<keyword id="KW-1185">Reference proteome</keyword>
<keyword id="KW-0720">Serine protease</keyword>
<keyword id="KW-0809">Transit peptide</keyword>
<dbReference type="EC" id="3.4.21.53" evidence="1"/>
<dbReference type="EMBL" id="U88087">
    <property type="protein sequence ID" value="AAB48000.1"/>
    <property type="status" value="ALT_FRAME"/>
    <property type="molecule type" value="mRNA"/>
</dbReference>
<dbReference type="EMBL" id="AF007270">
    <property type="protein sequence ID" value="AAB61060.1"/>
    <property type="status" value="ALT_SEQ"/>
    <property type="molecule type" value="Genomic_DNA"/>
</dbReference>
<dbReference type="EMBL" id="CP002688">
    <property type="status" value="NOT_ANNOTATED_CDS"/>
    <property type="molecule type" value="Genomic_DNA"/>
</dbReference>
<dbReference type="EMBL" id="AY091049">
    <property type="protein sequence ID" value="AAM13870.1"/>
    <property type="molecule type" value="mRNA"/>
</dbReference>
<dbReference type="EMBL" id="AY117355">
    <property type="protein sequence ID" value="AAM51430.1"/>
    <property type="molecule type" value="mRNA"/>
</dbReference>
<dbReference type="PIR" id="T01765">
    <property type="entry name" value="T01765"/>
</dbReference>
<dbReference type="SMR" id="P93655"/>
<dbReference type="BioGRID" id="18019">
    <property type="interactions" value="6"/>
</dbReference>
<dbReference type="FunCoup" id="P93655">
    <property type="interactions" value="2783"/>
</dbReference>
<dbReference type="IntAct" id="P93655">
    <property type="interactions" value="4"/>
</dbReference>
<dbReference type="STRING" id="3702.P93655"/>
<dbReference type="MEROPS" id="S16.011"/>
<dbReference type="iPTMnet" id="P93655"/>
<dbReference type="SwissPalm" id="P93655"/>
<dbReference type="PaxDb" id="3702-AT5G26860.1"/>
<dbReference type="ProteomicsDB" id="238630"/>
<dbReference type="Araport" id="AT5G26860"/>
<dbReference type="TAIR" id="AT5G26860">
    <property type="gene designation" value="LON1"/>
</dbReference>
<dbReference type="eggNOG" id="KOG2004">
    <property type="taxonomic scope" value="Eukaryota"/>
</dbReference>
<dbReference type="HOGENOM" id="CLU_004109_1_0_1"/>
<dbReference type="InParanoid" id="P93655"/>
<dbReference type="PhylomeDB" id="P93655"/>
<dbReference type="CD-CODE" id="4299E36E">
    <property type="entry name" value="Nucleolus"/>
</dbReference>
<dbReference type="PRO" id="PR:P93655"/>
<dbReference type="Proteomes" id="UP000006548">
    <property type="component" value="Chromosome 5"/>
</dbReference>
<dbReference type="ExpressionAtlas" id="P93655">
    <property type="expression patterns" value="baseline and differential"/>
</dbReference>
<dbReference type="GO" id="GO:0005759">
    <property type="term" value="C:mitochondrial matrix"/>
    <property type="evidence" value="ECO:0000318"/>
    <property type="project" value="GO_Central"/>
</dbReference>
<dbReference type="GO" id="GO:0005739">
    <property type="term" value="C:mitochondrion"/>
    <property type="evidence" value="ECO:0000314"/>
    <property type="project" value="TAIR"/>
</dbReference>
<dbReference type="GO" id="GO:0005524">
    <property type="term" value="F:ATP binding"/>
    <property type="evidence" value="ECO:0007005"/>
    <property type="project" value="TAIR"/>
</dbReference>
<dbReference type="GO" id="GO:0016887">
    <property type="term" value="F:ATP hydrolysis activity"/>
    <property type="evidence" value="ECO:0007669"/>
    <property type="project" value="UniProtKB-UniRule"/>
</dbReference>
<dbReference type="GO" id="GO:0004176">
    <property type="term" value="F:ATP-dependent peptidase activity"/>
    <property type="evidence" value="ECO:0000318"/>
    <property type="project" value="GO_Central"/>
</dbReference>
<dbReference type="GO" id="GO:0043565">
    <property type="term" value="F:sequence-specific DNA binding"/>
    <property type="evidence" value="ECO:0007669"/>
    <property type="project" value="UniProtKB-UniRule"/>
</dbReference>
<dbReference type="GO" id="GO:0004252">
    <property type="term" value="F:serine-type endopeptidase activity"/>
    <property type="evidence" value="ECO:0007669"/>
    <property type="project" value="UniProtKB-UniRule"/>
</dbReference>
<dbReference type="GO" id="GO:0003697">
    <property type="term" value="F:single-stranded DNA binding"/>
    <property type="evidence" value="ECO:0000318"/>
    <property type="project" value="GO_Central"/>
</dbReference>
<dbReference type="GO" id="GO:0034599">
    <property type="term" value="P:cellular response to oxidative stress"/>
    <property type="evidence" value="ECO:0007669"/>
    <property type="project" value="UniProtKB-UniRule"/>
</dbReference>
<dbReference type="GO" id="GO:0051131">
    <property type="term" value="P:chaperone-mediated protein complex assembly"/>
    <property type="evidence" value="ECO:0000318"/>
    <property type="project" value="GO_Central"/>
</dbReference>
<dbReference type="GO" id="GO:0007005">
    <property type="term" value="P:mitochondrion organization"/>
    <property type="evidence" value="ECO:0000318"/>
    <property type="project" value="GO_Central"/>
</dbReference>
<dbReference type="GO" id="GO:0070407">
    <property type="term" value="P:oxidation-dependent protein catabolic process"/>
    <property type="evidence" value="ECO:0007669"/>
    <property type="project" value="UniProtKB-UniRule"/>
</dbReference>
<dbReference type="GO" id="GO:0006515">
    <property type="term" value="P:protein quality control for misfolded or incompletely synthesized proteins"/>
    <property type="evidence" value="ECO:0000318"/>
    <property type="project" value="GO_Central"/>
</dbReference>
<dbReference type="CDD" id="cd19500">
    <property type="entry name" value="RecA-like_Lon"/>
    <property type="match status" value="1"/>
</dbReference>
<dbReference type="FunFam" id="3.40.50.300:FF:000021">
    <property type="entry name" value="Lon protease homolog"/>
    <property type="match status" value="1"/>
</dbReference>
<dbReference type="FunFam" id="1.10.8.60:FF:000080">
    <property type="entry name" value="Lon protease homolog, mitochondrial"/>
    <property type="match status" value="1"/>
</dbReference>
<dbReference type="FunFam" id="1.20.5.5270:FF:000001">
    <property type="entry name" value="Lon protease homolog, mitochondrial"/>
    <property type="match status" value="1"/>
</dbReference>
<dbReference type="FunFam" id="1.20.58.1480:FF:000006">
    <property type="entry name" value="Lon protease homolog, mitochondrial"/>
    <property type="match status" value="1"/>
</dbReference>
<dbReference type="FunFam" id="2.30.130.40:FF:000007">
    <property type="entry name" value="Lon protease homolog, mitochondrial"/>
    <property type="match status" value="1"/>
</dbReference>
<dbReference type="FunFam" id="3.30.230.10:FF:000015">
    <property type="entry name" value="Lon protease homolog, mitochondrial"/>
    <property type="match status" value="1"/>
</dbReference>
<dbReference type="Gene3D" id="1.10.8.60">
    <property type="match status" value="1"/>
</dbReference>
<dbReference type="Gene3D" id="1.20.5.5270">
    <property type="match status" value="1"/>
</dbReference>
<dbReference type="Gene3D" id="1.20.58.1480">
    <property type="match status" value="1"/>
</dbReference>
<dbReference type="Gene3D" id="3.30.230.10">
    <property type="match status" value="1"/>
</dbReference>
<dbReference type="Gene3D" id="2.30.130.40">
    <property type="entry name" value="LON domain-like"/>
    <property type="match status" value="1"/>
</dbReference>
<dbReference type="Gene3D" id="3.40.50.300">
    <property type="entry name" value="P-loop containing nucleotide triphosphate hydrolases"/>
    <property type="match status" value="1"/>
</dbReference>
<dbReference type="HAMAP" id="MF_03120">
    <property type="entry name" value="lonm_euk"/>
    <property type="match status" value="1"/>
</dbReference>
<dbReference type="InterPro" id="IPR003593">
    <property type="entry name" value="AAA+_ATPase"/>
</dbReference>
<dbReference type="InterPro" id="IPR003959">
    <property type="entry name" value="ATPase_AAA_core"/>
</dbReference>
<dbReference type="InterPro" id="IPR004815">
    <property type="entry name" value="Lon_bac/euk-typ"/>
</dbReference>
<dbReference type="InterPro" id="IPR054594">
    <property type="entry name" value="Lon_lid"/>
</dbReference>
<dbReference type="InterPro" id="IPR008269">
    <property type="entry name" value="Lon_proteolytic"/>
</dbReference>
<dbReference type="InterPro" id="IPR027065">
    <property type="entry name" value="Lon_Prtase"/>
</dbReference>
<dbReference type="InterPro" id="IPR003111">
    <property type="entry name" value="Lon_prtase_N"/>
</dbReference>
<dbReference type="InterPro" id="IPR046336">
    <property type="entry name" value="Lon_prtase_N_sf"/>
</dbReference>
<dbReference type="InterPro" id="IPR027503">
    <property type="entry name" value="Lonm_euk"/>
</dbReference>
<dbReference type="InterPro" id="IPR027417">
    <property type="entry name" value="P-loop_NTPase"/>
</dbReference>
<dbReference type="InterPro" id="IPR008268">
    <property type="entry name" value="Peptidase_S16_AS"/>
</dbReference>
<dbReference type="InterPro" id="IPR015947">
    <property type="entry name" value="PUA-like_sf"/>
</dbReference>
<dbReference type="InterPro" id="IPR020568">
    <property type="entry name" value="Ribosomal_Su5_D2-typ_SF"/>
</dbReference>
<dbReference type="InterPro" id="IPR014721">
    <property type="entry name" value="Ribsml_uS5_D2-typ_fold_subgr"/>
</dbReference>
<dbReference type="NCBIfam" id="TIGR00763">
    <property type="entry name" value="lon"/>
    <property type="match status" value="1"/>
</dbReference>
<dbReference type="PANTHER" id="PTHR43718">
    <property type="entry name" value="LON PROTEASE"/>
    <property type="match status" value="1"/>
</dbReference>
<dbReference type="PANTHER" id="PTHR43718:SF2">
    <property type="entry name" value="LON PROTEASE HOMOLOG, MITOCHONDRIAL"/>
    <property type="match status" value="1"/>
</dbReference>
<dbReference type="Pfam" id="PF00004">
    <property type="entry name" value="AAA"/>
    <property type="match status" value="1"/>
</dbReference>
<dbReference type="Pfam" id="PF05362">
    <property type="entry name" value="Lon_C"/>
    <property type="match status" value="1"/>
</dbReference>
<dbReference type="Pfam" id="PF22667">
    <property type="entry name" value="Lon_lid"/>
    <property type="match status" value="1"/>
</dbReference>
<dbReference type="Pfam" id="PF02190">
    <property type="entry name" value="LON_substr_bdg"/>
    <property type="match status" value="1"/>
</dbReference>
<dbReference type="PIRSF" id="PIRSF001174">
    <property type="entry name" value="Lon_proteas"/>
    <property type="match status" value="1"/>
</dbReference>
<dbReference type="PRINTS" id="PR00830">
    <property type="entry name" value="ENDOLAPTASE"/>
</dbReference>
<dbReference type="SMART" id="SM00382">
    <property type="entry name" value="AAA"/>
    <property type="match status" value="1"/>
</dbReference>
<dbReference type="SMART" id="SM00464">
    <property type="entry name" value="LON"/>
    <property type="match status" value="1"/>
</dbReference>
<dbReference type="SUPFAM" id="SSF52540">
    <property type="entry name" value="P-loop containing nucleoside triphosphate hydrolases"/>
    <property type="match status" value="1"/>
</dbReference>
<dbReference type="SUPFAM" id="SSF88697">
    <property type="entry name" value="PUA domain-like"/>
    <property type="match status" value="1"/>
</dbReference>
<dbReference type="SUPFAM" id="SSF54211">
    <property type="entry name" value="Ribosomal protein S5 domain 2-like"/>
    <property type="match status" value="1"/>
</dbReference>
<dbReference type="PROSITE" id="PS51787">
    <property type="entry name" value="LON_N"/>
    <property type="match status" value="1"/>
</dbReference>
<dbReference type="PROSITE" id="PS51786">
    <property type="entry name" value="LON_PROTEOLYTIC"/>
    <property type="match status" value="1"/>
</dbReference>
<dbReference type="PROSITE" id="PS01046">
    <property type="entry name" value="LON_SER"/>
    <property type="match status" value="1"/>
</dbReference>
<sequence length="940" mass="103930">MLKLFTSSASRVHHLTPVSRVVGSSPVESPLFKALSQITGWNRRSTSLGHRAFFCSEPTNGEAAAEAETKAVESDSEVSDSKSSSAIVPTNPRPEDCLTVLALPVPHRPLFPGFYMPIYVKDPKVLAALQESRRRQAPYAGAFLLKDDPSADSSSSTDAEKNINELKGKELLNRLHEVGTLAQISSIQGDQVILVGHRRLRIKEMVSEEPLTVKVDHLKDNPFDMDDDVVKATSFEVISTLRDVLKTSSLWRDHVQTYTQHIGDFTYPRLADFGAAICGANRHQAQEVLEELDVHKRLRLTLELMKKEMEISKIQETIAKAIEEKISGEQRRYLLNEQLKAIKKELGVETDDKSALSAKFKERIEPNKEKIPAHVLQVIEEELTKLQLLEASSSEFNVTRNYLDWLTILPWGNYSNENFDVARAQTILDEDHYGLSDVKERILEFIAVGRLRGTSQGKIICLSGPPGVGKTSIGRSIARALNRKFFRFSVGGLADVAEIKGHRRTYVGAMPGKMVQCLKSVGTANPLVLIDEIDKLGRGHAGDPASALLELLDPEQNANFLDHYLDVTIDLSKVLFVCTANVIDMIPNPLLDRMEVISIAGYITDEKVHIARDYLEKTARGDCGVKPEQVEVSDAALLSLIENYCREAGVRNLQKQIEKIYRKIALKLVREGAVPEEPAVASDPEEAEIVADVGESIENHTVEENTVSSAEEPKEEAQTEKIAIETVMIDESNLADYVGKPVFHAEKLYEQTPVGVVMGLAWTSMGGSTLYIETTVVEEGEGKGGLNITGQLGDVMKESAQIAHTVARKIMLEKEPENQFFANSKLHLHVPAGATPKDGPSAGCTMITSLLSLATKKPVRKDLAMTGEVTLTGRILPIGGVKEKTIAARRSQIKTIIFPEANRRDFDELAENVKEGLNVHFVDDYGKIFELAFGYDKQED</sequence>
<evidence type="ECO:0000255" key="1">
    <source>
        <dbReference type="HAMAP-Rule" id="MF_03120"/>
    </source>
</evidence>
<evidence type="ECO:0000255" key="2">
    <source>
        <dbReference type="PROSITE-ProRule" id="PRU01122"/>
    </source>
</evidence>
<evidence type="ECO:0000255" key="3">
    <source>
        <dbReference type="PROSITE-ProRule" id="PRU01123"/>
    </source>
</evidence>
<evidence type="ECO:0000256" key="4">
    <source>
        <dbReference type="SAM" id="MobiDB-lite"/>
    </source>
</evidence>
<evidence type="ECO:0000269" key="5">
    <source>
    </source>
</evidence>
<evidence type="ECO:0000269" key="6">
    <source>
    </source>
</evidence>
<evidence type="ECO:0000269" key="7">
    <source>
    </source>
</evidence>
<evidence type="ECO:0000305" key="8"/>
<evidence type="ECO:0007744" key="9">
    <source>
    </source>
</evidence>